<sequence length="548" mass="56838">MAAKEVKFGDSARKKMLVGVNVLADAVKATLGPKGRNVILEKSFGAPTITKDGVSVAKEIELEDRFENMGAQLVKDVASRANDDAGDGTTTATVLAQSIVNEGLKAVAAGMNPMDLKRGIDKATIAVVAELKKLSAPCTDTKAIAQVGTISANSDNSIGDIIAEAMEKVGKEGVITVEEGSGLENELSVVEGMQFDRGYLSPYFVNKPDTMVAELEGALILLVDKKISNIREMLPVLEAVAKAGRPLLIVAEDVEGEALATLVVNNMRGIVKVAAVKAPGFGDRRKAMLQDIAVLTGGTVISEEIGLSLESTTLEHLGSAKRVTLSKENTIIVDGAGNDGDIQARIAQIRAQVAETSSDYDREKLQERLAKLSGGVAVIKVGAGSEVEMKEKKARVEDALHATRAAVEEGVVPGGGVALIRALNAIINLKGDNADQDVGIAVLRRAVEAPLRQIAANSGDEPSVVVNEVKNGKGNFGYNAATGEYGDMIEMGILDPTKVTRSALQAASSIGGLILTTEAAVADAPKKDGAAGGGMPDMGGMGGMGGMM</sequence>
<organism>
    <name type="scientific">Pseudomonas fluorescens (strain Pf0-1)</name>
    <dbReference type="NCBI Taxonomy" id="205922"/>
    <lineage>
        <taxon>Bacteria</taxon>
        <taxon>Pseudomonadati</taxon>
        <taxon>Pseudomonadota</taxon>
        <taxon>Gammaproteobacteria</taxon>
        <taxon>Pseudomonadales</taxon>
        <taxon>Pseudomonadaceae</taxon>
        <taxon>Pseudomonas</taxon>
    </lineage>
</organism>
<reference key="1">
    <citation type="journal article" date="2009" name="Genome Biol.">
        <title>Genomic and genetic analyses of diversity and plant interactions of Pseudomonas fluorescens.</title>
        <authorList>
            <person name="Silby M.W."/>
            <person name="Cerdeno-Tarraga A.M."/>
            <person name="Vernikos G.S."/>
            <person name="Giddens S.R."/>
            <person name="Jackson R.W."/>
            <person name="Preston G.M."/>
            <person name="Zhang X.-X."/>
            <person name="Moon C.D."/>
            <person name="Gehrig S.M."/>
            <person name="Godfrey S.A.C."/>
            <person name="Knight C.G."/>
            <person name="Malone J.G."/>
            <person name="Robinson Z."/>
            <person name="Spiers A.J."/>
            <person name="Harris S."/>
            <person name="Challis G.L."/>
            <person name="Yaxley A.M."/>
            <person name="Harris D."/>
            <person name="Seeger K."/>
            <person name="Murphy L."/>
            <person name="Rutter S."/>
            <person name="Squares R."/>
            <person name="Quail M.A."/>
            <person name="Saunders E."/>
            <person name="Mavromatis K."/>
            <person name="Brettin T.S."/>
            <person name="Bentley S.D."/>
            <person name="Hothersall J."/>
            <person name="Stephens E."/>
            <person name="Thomas C.M."/>
            <person name="Parkhill J."/>
            <person name="Levy S.B."/>
            <person name="Rainey P.B."/>
            <person name="Thomson N.R."/>
        </authorList>
    </citation>
    <scope>NUCLEOTIDE SEQUENCE [LARGE SCALE GENOMIC DNA]</scope>
    <source>
        <strain>Pf0-1</strain>
    </source>
</reference>
<gene>
    <name evidence="1" type="primary">groEL</name>
    <name evidence="1" type="synonym">groL</name>
    <name type="ordered locus">Pfl01_4501</name>
</gene>
<keyword id="KW-0067">ATP-binding</keyword>
<keyword id="KW-0143">Chaperone</keyword>
<keyword id="KW-0963">Cytoplasm</keyword>
<keyword id="KW-0413">Isomerase</keyword>
<keyword id="KW-0547">Nucleotide-binding</keyword>
<proteinExistence type="inferred from homology"/>
<accession>Q3K7L6</accession>
<protein>
    <recommendedName>
        <fullName evidence="1">Chaperonin GroEL</fullName>
        <ecNumber evidence="1">5.6.1.7</ecNumber>
    </recommendedName>
    <alternativeName>
        <fullName evidence="1">60 kDa chaperonin</fullName>
    </alternativeName>
    <alternativeName>
        <fullName evidence="1">Chaperonin-60</fullName>
        <shortName evidence="1">Cpn60</shortName>
    </alternativeName>
</protein>
<evidence type="ECO:0000255" key="1">
    <source>
        <dbReference type="HAMAP-Rule" id="MF_00600"/>
    </source>
</evidence>
<comment type="function">
    <text evidence="1">Together with its co-chaperonin GroES, plays an essential role in assisting protein folding. The GroEL-GroES system forms a nano-cage that allows encapsulation of the non-native substrate proteins and provides a physical environment optimized to promote and accelerate protein folding.</text>
</comment>
<comment type="catalytic activity">
    <reaction evidence="1">
        <text>ATP + H2O + a folded polypeptide = ADP + phosphate + an unfolded polypeptide.</text>
        <dbReference type="EC" id="5.6.1.7"/>
    </reaction>
</comment>
<comment type="subunit">
    <text evidence="1">Forms a cylinder of 14 subunits composed of two heptameric rings stacked back-to-back. Interacts with the co-chaperonin GroES.</text>
</comment>
<comment type="subcellular location">
    <subcellularLocation>
        <location evidence="1">Cytoplasm</location>
    </subcellularLocation>
</comment>
<comment type="similarity">
    <text evidence="1">Belongs to the chaperonin (HSP60) family.</text>
</comment>
<dbReference type="EC" id="5.6.1.7" evidence="1"/>
<dbReference type="EMBL" id="CP000094">
    <property type="protein sequence ID" value="ABA76238.1"/>
    <property type="molecule type" value="Genomic_DNA"/>
</dbReference>
<dbReference type="RefSeq" id="WP_011335723.1">
    <property type="nucleotide sequence ID" value="NC_007492.2"/>
</dbReference>
<dbReference type="SMR" id="Q3K7L6"/>
<dbReference type="KEGG" id="pfo:Pfl01_4501"/>
<dbReference type="eggNOG" id="COG0459">
    <property type="taxonomic scope" value="Bacteria"/>
</dbReference>
<dbReference type="HOGENOM" id="CLU_016503_3_0_6"/>
<dbReference type="Proteomes" id="UP000002704">
    <property type="component" value="Chromosome"/>
</dbReference>
<dbReference type="GO" id="GO:0005737">
    <property type="term" value="C:cytoplasm"/>
    <property type="evidence" value="ECO:0007669"/>
    <property type="project" value="UniProtKB-SubCell"/>
</dbReference>
<dbReference type="GO" id="GO:0005524">
    <property type="term" value="F:ATP binding"/>
    <property type="evidence" value="ECO:0007669"/>
    <property type="project" value="UniProtKB-UniRule"/>
</dbReference>
<dbReference type="GO" id="GO:0140662">
    <property type="term" value="F:ATP-dependent protein folding chaperone"/>
    <property type="evidence" value="ECO:0007669"/>
    <property type="project" value="InterPro"/>
</dbReference>
<dbReference type="GO" id="GO:0016853">
    <property type="term" value="F:isomerase activity"/>
    <property type="evidence" value="ECO:0007669"/>
    <property type="project" value="UniProtKB-KW"/>
</dbReference>
<dbReference type="GO" id="GO:0051082">
    <property type="term" value="F:unfolded protein binding"/>
    <property type="evidence" value="ECO:0007669"/>
    <property type="project" value="UniProtKB-UniRule"/>
</dbReference>
<dbReference type="GO" id="GO:0042026">
    <property type="term" value="P:protein refolding"/>
    <property type="evidence" value="ECO:0007669"/>
    <property type="project" value="UniProtKB-UniRule"/>
</dbReference>
<dbReference type="CDD" id="cd03344">
    <property type="entry name" value="GroEL"/>
    <property type="match status" value="1"/>
</dbReference>
<dbReference type="FunFam" id="1.10.560.10:FF:000001">
    <property type="entry name" value="60 kDa chaperonin"/>
    <property type="match status" value="1"/>
</dbReference>
<dbReference type="FunFam" id="3.50.7.10:FF:000001">
    <property type="entry name" value="60 kDa chaperonin"/>
    <property type="match status" value="1"/>
</dbReference>
<dbReference type="Gene3D" id="3.50.7.10">
    <property type="entry name" value="GroEL"/>
    <property type="match status" value="1"/>
</dbReference>
<dbReference type="Gene3D" id="1.10.560.10">
    <property type="entry name" value="GroEL-like equatorial domain"/>
    <property type="match status" value="1"/>
</dbReference>
<dbReference type="Gene3D" id="3.30.260.10">
    <property type="entry name" value="TCP-1-like chaperonin intermediate domain"/>
    <property type="match status" value="1"/>
</dbReference>
<dbReference type="HAMAP" id="MF_00600">
    <property type="entry name" value="CH60"/>
    <property type="match status" value="1"/>
</dbReference>
<dbReference type="InterPro" id="IPR018370">
    <property type="entry name" value="Chaperonin_Cpn60_CS"/>
</dbReference>
<dbReference type="InterPro" id="IPR001844">
    <property type="entry name" value="Cpn60/GroEL"/>
</dbReference>
<dbReference type="InterPro" id="IPR002423">
    <property type="entry name" value="Cpn60/GroEL/TCP-1"/>
</dbReference>
<dbReference type="InterPro" id="IPR027409">
    <property type="entry name" value="GroEL-like_apical_dom_sf"/>
</dbReference>
<dbReference type="InterPro" id="IPR027413">
    <property type="entry name" value="GROEL-like_equatorial_sf"/>
</dbReference>
<dbReference type="InterPro" id="IPR027410">
    <property type="entry name" value="TCP-1-like_intermed_sf"/>
</dbReference>
<dbReference type="NCBIfam" id="TIGR02348">
    <property type="entry name" value="GroEL"/>
    <property type="match status" value="1"/>
</dbReference>
<dbReference type="NCBIfam" id="NF000592">
    <property type="entry name" value="PRK00013.1"/>
    <property type="match status" value="1"/>
</dbReference>
<dbReference type="NCBIfam" id="NF009487">
    <property type="entry name" value="PRK12849.1"/>
    <property type="match status" value="1"/>
</dbReference>
<dbReference type="NCBIfam" id="NF009488">
    <property type="entry name" value="PRK12850.1"/>
    <property type="match status" value="1"/>
</dbReference>
<dbReference type="NCBIfam" id="NF009489">
    <property type="entry name" value="PRK12851.1"/>
    <property type="match status" value="1"/>
</dbReference>
<dbReference type="PANTHER" id="PTHR45633">
    <property type="entry name" value="60 KDA HEAT SHOCK PROTEIN, MITOCHONDRIAL"/>
    <property type="match status" value="1"/>
</dbReference>
<dbReference type="Pfam" id="PF00118">
    <property type="entry name" value="Cpn60_TCP1"/>
    <property type="match status" value="1"/>
</dbReference>
<dbReference type="PRINTS" id="PR00298">
    <property type="entry name" value="CHAPERONIN60"/>
</dbReference>
<dbReference type="SUPFAM" id="SSF52029">
    <property type="entry name" value="GroEL apical domain-like"/>
    <property type="match status" value="1"/>
</dbReference>
<dbReference type="SUPFAM" id="SSF48592">
    <property type="entry name" value="GroEL equatorial domain-like"/>
    <property type="match status" value="1"/>
</dbReference>
<dbReference type="SUPFAM" id="SSF54849">
    <property type="entry name" value="GroEL-intermediate domain like"/>
    <property type="match status" value="1"/>
</dbReference>
<dbReference type="PROSITE" id="PS00296">
    <property type="entry name" value="CHAPERONINS_CPN60"/>
    <property type="match status" value="1"/>
</dbReference>
<feature type="chain" id="PRO_0000256951" description="Chaperonin GroEL">
    <location>
        <begin position="1"/>
        <end position="548"/>
    </location>
</feature>
<feature type="binding site" evidence="1">
    <location>
        <begin position="30"/>
        <end position="33"/>
    </location>
    <ligand>
        <name>ATP</name>
        <dbReference type="ChEBI" id="CHEBI:30616"/>
    </ligand>
</feature>
<feature type="binding site" evidence="1">
    <location>
        <position position="51"/>
    </location>
    <ligand>
        <name>ATP</name>
        <dbReference type="ChEBI" id="CHEBI:30616"/>
    </ligand>
</feature>
<feature type="binding site" evidence="1">
    <location>
        <begin position="87"/>
        <end position="91"/>
    </location>
    <ligand>
        <name>ATP</name>
        <dbReference type="ChEBI" id="CHEBI:30616"/>
    </ligand>
</feature>
<feature type="binding site" evidence="1">
    <location>
        <position position="415"/>
    </location>
    <ligand>
        <name>ATP</name>
        <dbReference type="ChEBI" id="CHEBI:30616"/>
    </ligand>
</feature>
<feature type="binding site" evidence="1">
    <location>
        <begin position="479"/>
        <end position="481"/>
    </location>
    <ligand>
        <name>ATP</name>
        <dbReference type="ChEBI" id="CHEBI:30616"/>
    </ligand>
</feature>
<feature type="binding site" evidence="1">
    <location>
        <position position="495"/>
    </location>
    <ligand>
        <name>ATP</name>
        <dbReference type="ChEBI" id="CHEBI:30616"/>
    </ligand>
</feature>
<name>CH60_PSEPF</name>